<feature type="chain" id="PRO_1000185966" description="3-ketoacyl-CoA thiolase">
    <location>
        <begin position="1"/>
        <end position="436"/>
    </location>
</feature>
<feature type="active site" description="Acyl-thioester intermediate" evidence="1">
    <location>
        <position position="99"/>
    </location>
</feature>
<feature type="active site" description="Proton acceptor" evidence="1">
    <location>
        <position position="392"/>
    </location>
</feature>
<feature type="active site" description="Proton acceptor" evidence="1">
    <location>
        <position position="422"/>
    </location>
</feature>
<dbReference type="EC" id="2.3.1.16" evidence="1"/>
<dbReference type="EMBL" id="AP009240">
    <property type="protein sequence ID" value="BAG78175.1"/>
    <property type="molecule type" value="Genomic_DNA"/>
</dbReference>
<dbReference type="RefSeq" id="WP_000531954.1">
    <property type="nucleotide sequence ID" value="NC_011415.1"/>
</dbReference>
<dbReference type="SMR" id="B6I6Q5"/>
<dbReference type="GeneID" id="75202576"/>
<dbReference type="KEGG" id="ecy:ECSE_2651"/>
<dbReference type="HOGENOM" id="CLU_031026_2_0_6"/>
<dbReference type="UniPathway" id="UPA00659"/>
<dbReference type="Proteomes" id="UP000008199">
    <property type="component" value="Chromosome"/>
</dbReference>
<dbReference type="GO" id="GO:0005829">
    <property type="term" value="C:cytosol"/>
    <property type="evidence" value="ECO:0007669"/>
    <property type="project" value="TreeGrafter"/>
</dbReference>
<dbReference type="GO" id="GO:0003988">
    <property type="term" value="F:acetyl-CoA C-acyltransferase activity"/>
    <property type="evidence" value="ECO:0007669"/>
    <property type="project" value="UniProtKB-UniRule"/>
</dbReference>
<dbReference type="GO" id="GO:0006635">
    <property type="term" value="P:fatty acid beta-oxidation"/>
    <property type="evidence" value="ECO:0007669"/>
    <property type="project" value="UniProtKB-UniRule"/>
</dbReference>
<dbReference type="CDD" id="cd00751">
    <property type="entry name" value="thiolase"/>
    <property type="match status" value="1"/>
</dbReference>
<dbReference type="FunFam" id="3.40.47.10:FF:000011">
    <property type="entry name" value="3-ketoacyl-CoA thiolase"/>
    <property type="match status" value="1"/>
</dbReference>
<dbReference type="Gene3D" id="3.40.47.10">
    <property type="match status" value="1"/>
</dbReference>
<dbReference type="HAMAP" id="MF_01618">
    <property type="entry name" value="FadI"/>
    <property type="match status" value="1"/>
</dbReference>
<dbReference type="InterPro" id="IPR012806">
    <property type="entry name" value="Ac-CoA_C-AcTrfase_FadI"/>
</dbReference>
<dbReference type="InterPro" id="IPR002155">
    <property type="entry name" value="Thiolase"/>
</dbReference>
<dbReference type="InterPro" id="IPR016039">
    <property type="entry name" value="Thiolase-like"/>
</dbReference>
<dbReference type="InterPro" id="IPR020615">
    <property type="entry name" value="Thiolase_acyl_enz_int_AS"/>
</dbReference>
<dbReference type="InterPro" id="IPR020610">
    <property type="entry name" value="Thiolase_AS"/>
</dbReference>
<dbReference type="InterPro" id="IPR020617">
    <property type="entry name" value="Thiolase_C"/>
</dbReference>
<dbReference type="InterPro" id="IPR020613">
    <property type="entry name" value="Thiolase_CS"/>
</dbReference>
<dbReference type="InterPro" id="IPR020616">
    <property type="entry name" value="Thiolase_N"/>
</dbReference>
<dbReference type="NCBIfam" id="TIGR01930">
    <property type="entry name" value="AcCoA-C-Actrans"/>
    <property type="match status" value="1"/>
</dbReference>
<dbReference type="NCBIfam" id="TIGR02446">
    <property type="entry name" value="FadI"/>
    <property type="match status" value="1"/>
</dbReference>
<dbReference type="NCBIfam" id="NF006516">
    <property type="entry name" value="PRK08963.1"/>
    <property type="match status" value="1"/>
</dbReference>
<dbReference type="PANTHER" id="PTHR18919:SF107">
    <property type="entry name" value="ACETYL-COA ACETYLTRANSFERASE, CYTOSOLIC"/>
    <property type="match status" value="1"/>
</dbReference>
<dbReference type="PANTHER" id="PTHR18919">
    <property type="entry name" value="ACETYL-COA C-ACYLTRANSFERASE"/>
    <property type="match status" value="1"/>
</dbReference>
<dbReference type="Pfam" id="PF02803">
    <property type="entry name" value="Thiolase_C"/>
    <property type="match status" value="1"/>
</dbReference>
<dbReference type="Pfam" id="PF00108">
    <property type="entry name" value="Thiolase_N"/>
    <property type="match status" value="1"/>
</dbReference>
<dbReference type="PIRSF" id="PIRSF000429">
    <property type="entry name" value="Ac-CoA_Ac_transf"/>
    <property type="match status" value="1"/>
</dbReference>
<dbReference type="SUPFAM" id="SSF53901">
    <property type="entry name" value="Thiolase-like"/>
    <property type="match status" value="2"/>
</dbReference>
<dbReference type="PROSITE" id="PS00098">
    <property type="entry name" value="THIOLASE_1"/>
    <property type="match status" value="1"/>
</dbReference>
<dbReference type="PROSITE" id="PS00737">
    <property type="entry name" value="THIOLASE_2"/>
    <property type="match status" value="1"/>
</dbReference>
<dbReference type="PROSITE" id="PS00099">
    <property type="entry name" value="THIOLASE_3"/>
    <property type="match status" value="1"/>
</dbReference>
<name>FADI_ECOSE</name>
<sequence>MGQVLPLVTRQGDRIAIVSGLRTPFARQATAFHGIPAVDLGKMVVGELLARSEIPAEVIEQLVFGQVVQMPEAPNIAREIVLGTGMNVHTDAYSVSRACATSFQAVANVAESLMAGTIRAGIAGGADSSSVLPIGVSKKLARVLVDVNKARTMSQRLKLFSRLRLRDLMPVPPAVAEYSTGLRMGDTAEQMAKTYGITREQQDALAHRSHQRAAQAWSDGKLKEEVMTAFIPPYKQPLVEDNNIRGNSSLADYAKLRPAFDRKHGTVTAANSTPLTDGAAAVILMTESRAKELGLVPLGYLRSYAFTAIDVWQDMLLGPAWSTPLALERAGLTMSDLTLIDMHEAFAAQTLANIQLLGSERFAREVLGRAHATGEVDDSKFNVLGGSIAYGHPFAATGARMITQTLHELRRRGGGFGLVTACAAGGLGAAMVLEAE</sequence>
<accession>B6I6Q5</accession>
<protein>
    <recommendedName>
        <fullName evidence="1">3-ketoacyl-CoA thiolase</fullName>
        <ecNumber evidence="1">2.3.1.16</ecNumber>
    </recommendedName>
    <alternativeName>
        <fullName evidence="1">ACSs</fullName>
    </alternativeName>
    <alternativeName>
        <fullName evidence="1">Acetyl-CoA acyltransferase</fullName>
    </alternativeName>
    <alternativeName>
        <fullName evidence="1">Acyl-CoA ligase</fullName>
    </alternativeName>
    <alternativeName>
        <fullName evidence="1">Beta-ketothiolase</fullName>
    </alternativeName>
    <alternativeName>
        <fullName evidence="1">Fatty acid oxidation complex subunit beta</fullName>
    </alternativeName>
</protein>
<comment type="function">
    <text evidence="1">Catalyzes the final step of fatty acid oxidation in which acetyl-CoA is released and the CoA ester of a fatty acid two carbons shorter is formed.</text>
</comment>
<comment type="catalytic activity">
    <reaction evidence="1">
        <text>an acyl-CoA + acetyl-CoA = a 3-oxoacyl-CoA + CoA</text>
        <dbReference type="Rhea" id="RHEA:21564"/>
        <dbReference type="ChEBI" id="CHEBI:57287"/>
        <dbReference type="ChEBI" id="CHEBI:57288"/>
        <dbReference type="ChEBI" id="CHEBI:58342"/>
        <dbReference type="ChEBI" id="CHEBI:90726"/>
        <dbReference type="EC" id="2.3.1.16"/>
    </reaction>
</comment>
<comment type="pathway">
    <text evidence="1">Lipid metabolism; fatty acid beta-oxidation.</text>
</comment>
<comment type="subunit">
    <text evidence="1">Heterotetramer of two alpha chains (FadJ) and two beta chains (FadI).</text>
</comment>
<comment type="subcellular location">
    <subcellularLocation>
        <location evidence="1">Cytoplasm</location>
    </subcellularLocation>
</comment>
<comment type="similarity">
    <text evidence="1">Belongs to the thiolase-like superfamily. Thiolase family.</text>
</comment>
<reference key="1">
    <citation type="journal article" date="2008" name="DNA Res.">
        <title>Complete genome sequence and comparative analysis of the wild-type commensal Escherichia coli strain SE11 isolated from a healthy adult.</title>
        <authorList>
            <person name="Oshima K."/>
            <person name="Toh H."/>
            <person name="Ogura Y."/>
            <person name="Sasamoto H."/>
            <person name="Morita H."/>
            <person name="Park S.-H."/>
            <person name="Ooka T."/>
            <person name="Iyoda S."/>
            <person name="Taylor T.D."/>
            <person name="Hayashi T."/>
            <person name="Itoh K."/>
            <person name="Hattori M."/>
        </authorList>
    </citation>
    <scope>NUCLEOTIDE SEQUENCE [LARGE SCALE GENOMIC DNA]</scope>
    <source>
        <strain>SE11</strain>
    </source>
</reference>
<gene>
    <name evidence="1" type="primary">fadI</name>
    <name type="ordered locus">ECSE_2651</name>
</gene>
<evidence type="ECO:0000255" key="1">
    <source>
        <dbReference type="HAMAP-Rule" id="MF_01618"/>
    </source>
</evidence>
<organism>
    <name type="scientific">Escherichia coli (strain SE11)</name>
    <dbReference type="NCBI Taxonomy" id="409438"/>
    <lineage>
        <taxon>Bacteria</taxon>
        <taxon>Pseudomonadati</taxon>
        <taxon>Pseudomonadota</taxon>
        <taxon>Gammaproteobacteria</taxon>
        <taxon>Enterobacterales</taxon>
        <taxon>Enterobacteriaceae</taxon>
        <taxon>Escherichia</taxon>
    </lineage>
</organism>
<keyword id="KW-0012">Acyltransferase</keyword>
<keyword id="KW-0963">Cytoplasm</keyword>
<keyword id="KW-0276">Fatty acid metabolism</keyword>
<keyword id="KW-0442">Lipid degradation</keyword>
<keyword id="KW-0443">Lipid metabolism</keyword>
<keyword id="KW-0808">Transferase</keyword>
<proteinExistence type="inferred from homology"/>